<gene>
    <name evidence="16" type="primary">crhR</name>
    <name evidence="17" type="synonym">deaD</name>
    <name type="ordered locus">slr0083</name>
</gene>
<protein>
    <recommendedName>
        <fullName evidence="16">RNA helicase CrhR</fullName>
        <ecNumber evidence="7">3.6.4.13</ecNumber>
    </recommendedName>
</protein>
<feature type="chain" id="PRO_0000434785" description="RNA helicase CrhR">
    <location>
        <begin position="1"/>
        <end position="492"/>
    </location>
</feature>
<feature type="domain" description="Helicase ATP-binding" evidence="1">
    <location>
        <begin position="38"/>
        <end position="207"/>
    </location>
</feature>
<feature type="domain" description="Helicase C-terminal" evidence="2">
    <location>
        <begin position="234"/>
        <end position="379"/>
    </location>
</feature>
<feature type="region of interest" description="Disordered" evidence="5">
    <location>
        <begin position="451"/>
        <end position="492"/>
    </location>
</feature>
<feature type="short sequence motif" description="Q motif" evidence="3">
    <location>
        <begin position="7"/>
        <end position="35"/>
    </location>
</feature>
<feature type="short sequence motif" description="DEAD box" evidence="1">
    <location>
        <begin position="155"/>
        <end position="158"/>
    </location>
</feature>
<feature type="compositionally biased region" description="Gly residues" evidence="5">
    <location>
        <begin position="457"/>
        <end position="471"/>
    </location>
</feature>
<feature type="binding site" evidence="1">
    <location>
        <begin position="51"/>
        <end position="58"/>
    </location>
    <ligand>
        <name>ATP</name>
        <dbReference type="ChEBI" id="CHEBI:30616"/>
    </ligand>
</feature>
<name>CRHR_SYNY3</name>
<reference key="1">
    <citation type="journal article" date="1996" name="DNA Res.">
        <title>Sequence analysis of the genome of the unicellular cyanobacterium Synechocystis sp. strain PCC6803. II. Sequence determination of the entire genome and assignment of potential protein-coding regions.</title>
        <authorList>
            <person name="Kaneko T."/>
            <person name="Sato S."/>
            <person name="Kotani H."/>
            <person name="Tanaka A."/>
            <person name="Asamizu E."/>
            <person name="Nakamura Y."/>
            <person name="Miyajima N."/>
            <person name="Hirosawa M."/>
            <person name="Sugiura M."/>
            <person name="Sasamoto S."/>
            <person name="Kimura T."/>
            <person name="Hosouchi T."/>
            <person name="Matsuno A."/>
            <person name="Muraki A."/>
            <person name="Nakazaki N."/>
            <person name="Naruo K."/>
            <person name="Okumura S."/>
            <person name="Shimpo S."/>
            <person name="Takeuchi C."/>
            <person name="Wada T."/>
            <person name="Watanabe A."/>
            <person name="Yamada M."/>
            <person name="Yasuda M."/>
            <person name="Tabata S."/>
        </authorList>
    </citation>
    <scope>NUCLEOTIDE SEQUENCE [LARGE SCALE GENOMIC DNA]</scope>
    <source>
        <strain>ATCC 27184 / PCC 6803 / Kazusa</strain>
    </source>
</reference>
<reference key="2">
    <citation type="journal article" date="2000" name="Plant Physiol.">
        <title>Redox-regulated RNA helicase expression.</title>
        <authorList>
            <person name="Kujat S.L."/>
            <person name="Owttrim G.W."/>
        </authorList>
    </citation>
    <scope>INDUCTION UNDER REDOX CONTROL</scope>
    <source>
        <strain>ATCC 27184 / PCC 6803 / Kazusa</strain>
    </source>
</reference>
<reference key="3">
    <citation type="journal article" date="2005" name="J. Biol. Chem.">
        <title>RNA structural rearrangement via unwinding and annealing by the cyanobacterial RNA helicase, CrhR.</title>
        <authorList>
            <person name="Chamot D."/>
            <person name="Colvin K.R."/>
            <person name="Kujat-Choy S.L."/>
            <person name="Owttrim G.W."/>
        </authorList>
    </citation>
    <scope>FUNCTION</scope>
    <scope>SUBSTRATE SPECIFICITY</scope>
    <scope>CATALYTIC ACTIVITY</scope>
    <scope>ACTIVITY REGULATION</scope>
    <source>
        <strain>ATCC 27184 / PCC 6803 / Kazusa</strain>
    </source>
</reference>
<reference key="4">
    <citation type="journal article" date="2006" name="Nucleic Acids Res.">
        <title>A LexA-related protein regulates redox-sensitive expression of the cyanobacterial RNA helicase, crhR.</title>
        <authorList>
            <person name="Patterson-Fortin L.M."/>
            <person name="Colvin K.R."/>
            <person name="Owttrim G.W."/>
        </authorList>
    </citation>
    <scope>INDUCTION BY COLD SHOCK</scope>
    <source>
        <strain>ATCC 27184 / PCC 6803 / Kazusa</strain>
    </source>
</reference>
<reference key="5">
    <citation type="journal article" date="2010" name="Microbiology">
        <title>An RNA helicase, CrhR, regulates the low-temperature-inducible expression of heat-shock genes groES, groEL1 and groEL2 in Synechocystis sp. PCC 6803.</title>
        <authorList>
            <person name="Prakash J.S."/>
            <person name="Krishna P.S."/>
            <person name="Sirisha K."/>
            <person name="Kanesaki Y."/>
            <person name="Suzuki I."/>
            <person name="Shivaji S."/>
            <person name="Murata N."/>
        </authorList>
    </citation>
    <scope>FUNCTION</scope>
    <scope>SUBCELLULAR LOCATION</scope>
    <scope>INDUCTION BY COLD SHOCK</scope>
    <scope>DISRUPTION PHENOTYPE</scope>
    <source>
        <strain>ATCC 27184 / PCC 6803 / Kazusa</strain>
    </source>
</reference>
<reference key="6">
    <citation type="journal article" date="2012" name="Plant Cell Physiol.">
        <title>Inactivation of a low temperature-induced RNA helicase in Synechocystis sp. PCC 6803: physiological and morphological consequences.</title>
        <authorList>
            <person name="Rosana A.R."/>
            <person name="Ventakesh M."/>
            <person name="Chamot D."/>
            <person name="Patterson-Fortin L.M."/>
            <person name="Tarassova O."/>
            <person name="Espie G.S."/>
            <person name="Owttrim G.W."/>
        </authorList>
    </citation>
    <scope>SUBCELLULAR LOCATION</scope>
    <scope>DISRUPTION PHENOTYPE</scope>
    <source>
        <strain>ATCC 27184 / PCC 6803 / Kazusa</strain>
    </source>
</reference>
<reference key="7">
    <citation type="journal article" date="2012" name="Biochim. Biophys. Acta">
        <title>RNA helicase, CrhR is indispensable for the energy redistribution and the regulation of photosystem stoichiometry at low temperature in Synechocystis sp. PCC6803.</title>
        <authorList>
            <person name="Sireesha K."/>
            <person name="Radharani B."/>
            <person name="Krishna P.S."/>
            <person name="Sreedhar N."/>
            <person name="Subramanyam R."/>
            <person name="Mohanty P."/>
            <person name="Prakash J.S."/>
        </authorList>
    </citation>
    <scope>FUNCTION</scope>
    <scope>DISRUPTION PHENOTYPE</scope>
    <source>
        <strain>ATCC 27184 / PCC 6803 / Kazusa</strain>
    </source>
</reference>
<reference key="8">
    <citation type="journal article" date="2012" name="PLoS ONE">
        <title>Autoregulation of RNA helicase expression in response to temperature stress in Synechocystis sp. PCC 6803.</title>
        <authorList>
            <person name="Rosana A.R."/>
            <person name="Chamot D."/>
            <person name="Owttrim G.W."/>
        </authorList>
    </citation>
    <scope>POSSIBLE FUNCTION IN AUTOREGULATION</scope>
    <scope>SUBCELLULAR LOCATION</scope>
    <scope>INDUCTION BY COLD</scope>
    <scope>DISRUPTION PHENOTYPE</scope>
    <source>
        <strain>ATCC 27184 / PCC 6803 / Kazusa</strain>
    </source>
</reference>
<reference key="9">
    <citation type="journal article" date="2014" name="J. Bacteriol.">
        <title>Conditional, temperature-induced proteolytic regulation of cyanobacterial RNA helicase expression.</title>
        <authorList>
            <person name="Tarassova O.S."/>
            <person name="Chamot D."/>
            <person name="Owttrim G.W."/>
        </authorList>
    </citation>
    <scope>ACTIVITY REGULATION</scope>
    <scope>DISRUPTION PHENOTYPE</scope>
    <source>
        <strain>ATCC 27184 / PCC 6803 / Kazusa</strain>
    </source>
</reference>
<reference key="10">
    <citation type="journal article" date="2016" name="J. Bacteriol.">
        <title>Cyanobacterial RNA Helicase CrhR Localizes to the Thylakoid Membrane Region and Cosediments with Degradosome and Polysome Complexes in Synechocystis sp. Strain PCC 6803.</title>
        <authorList>
            <person name="Rosana A.R."/>
            <person name="Whitford D.S."/>
            <person name="Fahlman R.P."/>
            <person name="Owttrim G.W."/>
        </authorList>
    </citation>
    <scope>SUBCELLULAR LOCATION</scope>
    <source>
        <strain>ATCC 27184 / PCC 6803 / Kazusa</strain>
    </source>
</reference>
<reference key="11">
    <citation type="journal article" date="2020" name="J. Biol. Chem.">
        <title>RNA helicase-regulated processing of the Synechocystis rimO-crhR operon results in differential cistron expression and accumulation of two sRNAs.</title>
        <authorList>
            <person name="Rosana A.R.R."/>
            <person name="Whitford D.S."/>
            <person name="Migur A."/>
            <person name="Steglich C."/>
            <person name="Kujat-Choy S.L."/>
            <person name="Hess W.R."/>
            <person name="Owttrim G.W."/>
        </authorList>
    </citation>
    <scope>INDUCTION</scope>
    <scope>DISRUPTION PHENOTYPE</scope>
    <source>
        <strain>ATCC 27184 / PCC 6803 / Kazusa</strain>
    </source>
</reference>
<sequence length="492" mass="55120">MTNTLTSTFADLGLSEKRCQLLADIGFEAPTQIQTEAIPLLLSGRDMLAQSQTGTGKTAAFALPLMDRIDPEGDLQALILTPTRELAQQVAEAMKDFSHERRLFILNVYGGQSIERQIRSLERGVQIVVGTPGRVIDLIDRKKLKLETIQWVVLDEADEMLSMGFIDDVKTILRKTPPTRQTACFSATMPREIKELVNQFLNDPALVTVKQTQSTPTRIEQQLYHVPRGWSKAKALQPILEMEDPESAIIFVRTKQTAADLTSRLQEAGHSVDEYHGNLSQSQRERLVHRFRDGKIKLVVATDIAARGLDVNNLSHVVNFDLPDNAETYIHRIGRTGRAGKTGKAIALVEPIDRRLLRSIENRLKQQIEVCTIPNRSQVEAKRIEKLQEQLKEALTGERMASFLPLVRELSDEYDAQAIAAAALQMIYDQSCPHWMKSDWEVPEVDFNKPVLRRGRNAGGGQNKSGGGYQGKPGKPRRSSGGRRPAYSDRQQ</sequence>
<proteinExistence type="evidence at protein level"/>
<accession>Q55804</accession>
<comment type="function">
    <text evidence="7 9 11 19">An ATP-dependent bidirectional RNA helicase with RNA-dependent ATPase activity; does not unwind dsDNA, uses only (d)ATP (PubMed:15542859). Also has ATP-dependent RNA annealing activity; concurrent annealing and helicase activity promote strand-exchange activity (PubMed:15542859). In vitro has low helicase processivity, annealing processivity is probably higher (PubMed:15542859). Required for correct cold adaptation, probably by aiding translation of mRNAs required for photosynthesis and electron transport (PubMed:22575444). Probably regulates the cold-shock-inducible expression of the GroESL chaperones (PubMed:19926653). May partially regulate its own expression at both the transcriptional and post-transcriptional level (experiments used a construct expressing a 25 kDa trunacted protein which might have dominant-negative effects); is probably not directly involved in the pathway responsible for mRNA degradation (PubMed:23119089).</text>
</comment>
<comment type="catalytic activity">
    <reaction evidence="7">
        <text>ATP + H2O = ADP + phosphate + H(+)</text>
        <dbReference type="Rhea" id="RHEA:13065"/>
        <dbReference type="ChEBI" id="CHEBI:15377"/>
        <dbReference type="ChEBI" id="CHEBI:15378"/>
        <dbReference type="ChEBI" id="CHEBI:30616"/>
        <dbReference type="ChEBI" id="CHEBI:43474"/>
        <dbReference type="ChEBI" id="CHEBI:456216"/>
        <dbReference type="EC" id="3.6.4.13"/>
    </reaction>
</comment>
<comment type="activity regulation">
    <text evidence="7 13">Helicase inhibited by the slowly-hydrolyzing ATP analog ATP-gamma-S (PubMed:15542859). Protein is rapidly degraded upon shifting from 20 to 30 degrees Celsius, the degradation machinery is only transiently present in cells grown at 30 degrees Celsius, is inhibited by commercial protease inhibitors and requires full-length protein expression (the N-terminal fragment does not induce proteolysis although it can be degraded by wild-type extract) (PubMed:24509313).</text>
</comment>
<comment type="subcellular location">
    <subcellularLocation>
        <location evidence="9 10 12 14">Cytoplasm</location>
    </subcellularLocation>
    <subcellularLocation>
        <location evidence="20">Cell inner membrane</location>
        <topology evidence="18">Peripheral membrane protein</topology>
    </subcellularLocation>
    <subcellularLocation>
        <location evidence="14">Cellular thylakoid membrane</location>
        <topology evidence="18">Peripheral membrane protein</topology>
    </subcellularLocation>
    <text evidence="14">A small amount is localized to the cell inner membrane and the thylakoid membrane, and cosediments with polysomes.</text>
</comment>
<comment type="induction">
    <text evidence="6 8 12 15">Constitutively expressed; higher levels are found in light-grown cells and lower levels in dark cells unless grown in glucose (at protein level) (PubMed:11027719, PubMed:23119089). Transcript level is regulated by the redox state of the plastoquinone pool; transcript accumulates when electrons flow between PSII and cytochrome b6-f complex (reduction of the electron transport chain) (PubMed:11027719). LexA-like repressor probably represses its expression at least in part (PubMed:16840531). Induced by cold with maximal RNA induction at 15 degrees Celsius and maximal protein induction at 15-20 degrees Celsius (at protein level) (PubMed:23119089). Also expressed as part of the rimO-chrR operon; expression is greater at 20 than 30 degrees Celsius. The rimO-crhR transcript is processed between the 2 genes by RNase E (rne) (PubMed:32209657).</text>
</comment>
<comment type="disruption phenotype">
    <text evidence="9 10 11 12 13 15">Probably a complete knockout; no growth phenotype or large transcript changes at 34 degrees Celsius; at 24 degrees Celsius growth is considerably slower, while expression of a few genes is decreased (groES, groEL1, groEL2 and sll1611) or increased (pyrB, sll1911, sll1515 and rimO) (at 70 umol/photon/m(2)/s, 1% CO(2)) (PubMed:19926653, PubMed:32209657). At 24 degrees reduced chlorophyll and phycocyanin content and a gradual reduction in photosynthetic O(2) evolution; cells are locked in state 1 and unable to undergo state transitions, the plastoquinone pool is oxidized, leading to down-regulation of psaA and psaB transcripts and thus decreased PSI levels (PubMed:22575444). A partial knockout allowing expression of the first 224 residues as a 25 kDa truncated protein at 30 degrees Celsius has reduced growth, 20% reduced O(2) evolution and 10% reduced electron transport, at 20 degrees Celsius has similar, more severe effects; no growth with rapid loss of viability, little to no photosynthetic O(2) evolution, 50% reduced electron transport, decreased pigment content, smaller cell size and considerable intracellular disorganization (at 30 umol/photon/m(2)/s, sterile air) (PubMed:22368073). The latter mutant is able to concentrate inorganic carbon but cannot use it to fix CO(2) (PubMed:22368073). The truncated protein is constitutively expressed at 30 and 20 degrees Celsius and is no longer subject to normal regulation i.e. has lost cold-shock induction and dark-induced repression (PubMed:23119089, PubMed:24509313).</text>
</comment>
<comment type="similarity">
    <text evidence="4 18">Belongs to the DEAD box helicase family.</text>
</comment>
<keyword id="KW-0067">ATP-binding</keyword>
<keyword id="KW-0997">Cell inner membrane</keyword>
<keyword id="KW-1003">Cell membrane</keyword>
<keyword id="KW-0963">Cytoplasm</keyword>
<keyword id="KW-0347">Helicase</keyword>
<keyword id="KW-0378">Hydrolase</keyword>
<keyword id="KW-0472">Membrane</keyword>
<keyword id="KW-0547">Nucleotide-binding</keyword>
<keyword id="KW-1185">Reference proteome</keyword>
<keyword id="KW-0346">Stress response</keyword>
<keyword id="KW-0793">Thylakoid</keyword>
<evidence type="ECO:0000255" key="1">
    <source>
        <dbReference type="PROSITE-ProRule" id="PRU00541"/>
    </source>
</evidence>
<evidence type="ECO:0000255" key="2">
    <source>
        <dbReference type="PROSITE-ProRule" id="PRU00542"/>
    </source>
</evidence>
<evidence type="ECO:0000255" key="3">
    <source>
        <dbReference type="PROSITE-ProRule" id="PRU00552"/>
    </source>
</evidence>
<evidence type="ECO:0000255" key="4">
    <source>
        <dbReference type="RuleBase" id="RU000492"/>
    </source>
</evidence>
<evidence type="ECO:0000256" key="5">
    <source>
        <dbReference type="SAM" id="MobiDB-lite"/>
    </source>
</evidence>
<evidence type="ECO:0000269" key="6">
    <source>
    </source>
</evidence>
<evidence type="ECO:0000269" key="7">
    <source>
    </source>
</evidence>
<evidence type="ECO:0000269" key="8">
    <source>
    </source>
</evidence>
<evidence type="ECO:0000269" key="9">
    <source>
    </source>
</evidence>
<evidence type="ECO:0000269" key="10">
    <source>
    </source>
</evidence>
<evidence type="ECO:0000269" key="11">
    <source>
    </source>
</evidence>
<evidence type="ECO:0000269" key="12">
    <source>
    </source>
</evidence>
<evidence type="ECO:0000269" key="13">
    <source>
    </source>
</evidence>
<evidence type="ECO:0000269" key="14">
    <source>
    </source>
</evidence>
<evidence type="ECO:0000269" key="15">
    <source>
    </source>
</evidence>
<evidence type="ECO:0000303" key="16">
    <source>
    </source>
</evidence>
<evidence type="ECO:0000303" key="17">
    <source>
    </source>
</evidence>
<evidence type="ECO:0000305" key="18"/>
<evidence type="ECO:0000305" key="19">
    <source>
    </source>
</evidence>
<evidence type="ECO:0000305" key="20">
    <source>
    </source>
</evidence>
<dbReference type="EC" id="3.6.4.13" evidence="7"/>
<dbReference type="EMBL" id="BA000022">
    <property type="protein sequence ID" value="BAA10556.1"/>
    <property type="molecule type" value="Genomic_DNA"/>
</dbReference>
<dbReference type="PIR" id="S76612">
    <property type="entry name" value="S76612"/>
</dbReference>
<dbReference type="SMR" id="Q55804"/>
<dbReference type="DIP" id="DIP-48812N"/>
<dbReference type="FunCoup" id="Q55804">
    <property type="interactions" value="336"/>
</dbReference>
<dbReference type="IntAct" id="Q55804">
    <property type="interactions" value="4"/>
</dbReference>
<dbReference type="STRING" id="1148.gene:10500060"/>
<dbReference type="PaxDb" id="1148-1001719"/>
<dbReference type="EnsemblBacteria" id="BAA10556">
    <property type="protein sequence ID" value="BAA10556"/>
    <property type="gene ID" value="BAA10556"/>
</dbReference>
<dbReference type="KEGG" id="syn:slr0083"/>
<dbReference type="eggNOG" id="COG0513">
    <property type="taxonomic scope" value="Bacteria"/>
</dbReference>
<dbReference type="InParanoid" id="Q55804"/>
<dbReference type="PhylomeDB" id="Q55804"/>
<dbReference type="Proteomes" id="UP000001425">
    <property type="component" value="Chromosome"/>
</dbReference>
<dbReference type="GO" id="GO:0005829">
    <property type="term" value="C:cytosol"/>
    <property type="evidence" value="ECO:0000318"/>
    <property type="project" value="GO_Central"/>
</dbReference>
<dbReference type="GO" id="GO:0031676">
    <property type="term" value="C:plasma membrane-derived thylakoid membrane"/>
    <property type="evidence" value="ECO:0007669"/>
    <property type="project" value="UniProtKB-SubCell"/>
</dbReference>
<dbReference type="GO" id="GO:0034458">
    <property type="term" value="F:3'-5' RNA helicase activity"/>
    <property type="evidence" value="ECO:0000314"/>
    <property type="project" value="UniProtKB"/>
</dbReference>
<dbReference type="GO" id="GO:0032574">
    <property type="term" value="F:5'-3' RNA helicase activity"/>
    <property type="evidence" value="ECO:0000314"/>
    <property type="project" value="UniProtKB"/>
</dbReference>
<dbReference type="GO" id="GO:0005524">
    <property type="term" value="F:ATP binding"/>
    <property type="evidence" value="ECO:0007669"/>
    <property type="project" value="UniProtKB-KW"/>
</dbReference>
<dbReference type="GO" id="GO:0016887">
    <property type="term" value="F:ATP hydrolysis activity"/>
    <property type="evidence" value="ECO:0007669"/>
    <property type="project" value="RHEA"/>
</dbReference>
<dbReference type="GO" id="GO:0003724">
    <property type="term" value="F:RNA helicase activity"/>
    <property type="evidence" value="ECO:0000318"/>
    <property type="project" value="GO_Central"/>
</dbReference>
<dbReference type="GO" id="GO:0033592">
    <property type="term" value="F:RNA strand annealing activity"/>
    <property type="evidence" value="ECO:0000314"/>
    <property type="project" value="UniProtKB"/>
</dbReference>
<dbReference type="GO" id="GO:0034057">
    <property type="term" value="F:RNA strand-exchange activity"/>
    <property type="evidence" value="ECO:0000314"/>
    <property type="project" value="UniProtKB"/>
</dbReference>
<dbReference type="GO" id="GO:0009409">
    <property type="term" value="P:response to cold"/>
    <property type="evidence" value="ECO:0000318"/>
    <property type="project" value="GO_Central"/>
</dbReference>
<dbReference type="CDD" id="cd00268">
    <property type="entry name" value="DEADc"/>
    <property type="match status" value="1"/>
</dbReference>
<dbReference type="CDD" id="cd18787">
    <property type="entry name" value="SF2_C_DEAD"/>
    <property type="match status" value="1"/>
</dbReference>
<dbReference type="FunFam" id="3.40.50.300:FF:000108">
    <property type="entry name" value="ATP-dependent RNA helicase RhlE"/>
    <property type="match status" value="1"/>
</dbReference>
<dbReference type="Gene3D" id="3.40.50.300">
    <property type="entry name" value="P-loop containing nucleotide triphosphate hydrolases"/>
    <property type="match status" value="2"/>
</dbReference>
<dbReference type="InterPro" id="IPR011545">
    <property type="entry name" value="DEAD/DEAH_box_helicase_dom"/>
</dbReference>
<dbReference type="InterPro" id="IPR050547">
    <property type="entry name" value="DEAD_box_RNA_helicases"/>
</dbReference>
<dbReference type="InterPro" id="IPR014001">
    <property type="entry name" value="Helicase_ATP-bd"/>
</dbReference>
<dbReference type="InterPro" id="IPR001650">
    <property type="entry name" value="Helicase_C-like"/>
</dbReference>
<dbReference type="InterPro" id="IPR027417">
    <property type="entry name" value="P-loop_NTPase"/>
</dbReference>
<dbReference type="InterPro" id="IPR000629">
    <property type="entry name" value="RNA-helicase_DEAD-box_CS"/>
</dbReference>
<dbReference type="InterPro" id="IPR014014">
    <property type="entry name" value="RNA_helicase_DEAD_Q_motif"/>
</dbReference>
<dbReference type="PANTHER" id="PTHR47963:SF8">
    <property type="entry name" value="ATP-DEPENDENT RNA HELICASE DEAD"/>
    <property type="match status" value="1"/>
</dbReference>
<dbReference type="PANTHER" id="PTHR47963">
    <property type="entry name" value="DEAD-BOX ATP-DEPENDENT RNA HELICASE 47, MITOCHONDRIAL"/>
    <property type="match status" value="1"/>
</dbReference>
<dbReference type="Pfam" id="PF00270">
    <property type="entry name" value="DEAD"/>
    <property type="match status" value="1"/>
</dbReference>
<dbReference type="Pfam" id="PF25399">
    <property type="entry name" value="DeaD_dimer"/>
    <property type="match status" value="1"/>
</dbReference>
<dbReference type="Pfam" id="PF00271">
    <property type="entry name" value="Helicase_C"/>
    <property type="match status" value="1"/>
</dbReference>
<dbReference type="SMART" id="SM00487">
    <property type="entry name" value="DEXDc"/>
    <property type="match status" value="1"/>
</dbReference>
<dbReference type="SMART" id="SM00490">
    <property type="entry name" value="HELICc"/>
    <property type="match status" value="1"/>
</dbReference>
<dbReference type="SUPFAM" id="SSF52540">
    <property type="entry name" value="P-loop containing nucleoside triphosphate hydrolases"/>
    <property type="match status" value="1"/>
</dbReference>
<dbReference type="PROSITE" id="PS00039">
    <property type="entry name" value="DEAD_ATP_HELICASE"/>
    <property type="match status" value="1"/>
</dbReference>
<dbReference type="PROSITE" id="PS51192">
    <property type="entry name" value="HELICASE_ATP_BIND_1"/>
    <property type="match status" value="1"/>
</dbReference>
<dbReference type="PROSITE" id="PS51194">
    <property type="entry name" value="HELICASE_CTER"/>
    <property type="match status" value="1"/>
</dbReference>
<dbReference type="PROSITE" id="PS51195">
    <property type="entry name" value="Q_MOTIF"/>
    <property type="match status" value="1"/>
</dbReference>
<organism>
    <name type="scientific">Synechocystis sp. (strain ATCC 27184 / PCC 6803 / Kazusa)</name>
    <dbReference type="NCBI Taxonomy" id="1111708"/>
    <lineage>
        <taxon>Bacteria</taxon>
        <taxon>Bacillati</taxon>
        <taxon>Cyanobacteriota</taxon>
        <taxon>Cyanophyceae</taxon>
        <taxon>Synechococcales</taxon>
        <taxon>Merismopediaceae</taxon>
        <taxon>Synechocystis</taxon>
    </lineage>
</organism>